<organism>
    <name type="scientific">Parafrankia sp. (strain EAN1pec)</name>
    <dbReference type="NCBI Taxonomy" id="298653"/>
    <lineage>
        <taxon>Bacteria</taxon>
        <taxon>Bacillati</taxon>
        <taxon>Actinomycetota</taxon>
        <taxon>Actinomycetes</taxon>
        <taxon>Frankiales</taxon>
        <taxon>Frankiaceae</taxon>
        <taxon>Parafrankia</taxon>
    </lineage>
</organism>
<protein>
    <recommendedName>
        <fullName evidence="1">Probable dual-specificity RNA methyltransferase RlmN</fullName>
        <ecNumber evidence="1">2.1.1.192</ecNumber>
    </recommendedName>
    <alternativeName>
        <fullName evidence="1">23S rRNA (adenine(2503)-C(2))-methyltransferase</fullName>
    </alternativeName>
    <alternativeName>
        <fullName evidence="1">23S rRNA m2A2503 methyltransferase</fullName>
    </alternativeName>
    <alternativeName>
        <fullName evidence="1">Ribosomal RNA large subunit methyltransferase N</fullName>
    </alternativeName>
    <alternativeName>
        <fullName evidence="1">tRNA (adenine(37)-C(2))-methyltransferase</fullName>
    </alternativeName>
    <alternativeName>
        <fullName evidence="1">tRNA m2A37 methyltransferase</fullName>
    </alternativeName>
</protein>
<gene>
    <name evidence="1" type="primary">rlmN</name>
    <name type="ordered locus">Franean1_1166</name>
</gene>
<sequence length="385" mass="40692">MTATTAESGNLLPLVSGRSRPPRHLADLSRDERRAVATSLGLPAFRADQLARHYFTHHLRADDADLMTDLPASIRPALVEAMLPRLLTPATALDCDGGQTRKTVWRTVDGAKIESVLMRYPQRATVCVSSQAGCGMGCPFCATGQGGLTRNLSTAEIVEQVVDAARTMAARTTAEGGLPGGPGRLSNVVFMGMGEPLANYAALLAALHRLIDPAPDGLGLSARGLTVSTVGLVPAIRRLAGEGLPVTLAVSLHAPDDELRDELVPINTRWPVAEVLAAAWEYARVTGRRVSIEYALIDGVNDSPERADALAALLVGQLAHVNLIPLNPTGGSSWQASAPRGQRVFVERLRARGVAATVRDTRGREIAAACGQLAAEPPVRSRAGR</sequence>
<evidence type="ECO:0000255" key="1">
    <source>
        <dbReference type="HAMAP-Rule" id="MF_01849"/>
    </source>
</evidence>
<evidence type="ECO:0000255" key="2">
    <source>
        <dbReference type="PROSITE-ProRule" id="PRU01266"/>
    </source>
</evidence>
<evidence type="ECO:0000256" key="3">
    <source>
        <dbReference type="SAM" id="MobiDB-lite"/>
    </source>
</evidence>
<comment type="function">
    <text evidence="1">Specifically methylates position 2 of adenine 2503 in 23S rRNA and position 2 of adenine 37 in tRNAs.</text>
</comment>
<comment type="catalytic activity">
    <reaction evidence="1">
        <text>adenosine(2503) in 23S rRNA + 2 reduced [2Fe-2S]-[ferredoxin] + 2 S-adenosyl-L-methionine = 2-methyladenosine(2503) in 23S rRNA + 5'-deoxyadenosine + L-methionine + 2 oxidized [2Fe-2S]-[ferredoxin] + S-adenosyl-L-homocysteine</text>
        <dbReference type="Rhea" id="RHEA:42916"/>
        <dbReference type="Rhea" id="RHEA-COMP:10000"/>
        <dbReference type="Rhea" id="RHEA-COMP:10001"/>
        <dbReference type="Rhea" id="RHEA-COMP:10152"/>
        <dbReference type="Rhea" id="RHEA-COMP:10282"/>
        <dbReference type="ChEBI" id="CHEBI:17319"/>
        <dbReference type="ChEBI" id="CHEBI:33737"/>
        <dbReference type="ChEBI" id="CHEBI:33738"/>
        <dbReference type="ChEBI" id="CHEBI:57844"/>
        <dbReference type="ChEBI" id="CHEBI:57856"/>
        <dbReference type="ChEBI" id="CHEBI:59789"/>
        <dbReference type="ChEBI" id="CHEBI:74411"/>
        <dbReference type="ChEBI" id="CHEBI:74497"/>
        <dbReference type="EC" id="2.1.1.192"/>
    </reaction>
</comment>
<comment type="catalytic activity">
    <reaction evidence="1">
        <text>adenosine(37) in tRNA + 2 reduced [2Fe-2S]-[ferredoxin] + 2 S-adenosyl-L-methionine = 2-methyladenosine(37) in tRNA + 5'-deoxyadenosine + L-methionine + 2 oxidized [2Fe-2S]-[ferredoxin] + S-adenosyl-L-homocysteine</text>
        <dbReference type="Rhea" id="RHEA:43332"/>
        <dbReference type="Rhea" id="RHEA-COMP:10000"/>
        <dbReference type="Rhea" id="RHEA-COMP:10001"/>
        <dbReference type="Rhea" id="RHEA-COMP:10162"/>
        <dbReference type="Rhea" id="RHEA-COMP:10485"/>
        <dbReference type="ChEBI" id="CHEBI:17319"/>
        <dbReference type="ChEBI" id="CHEBI:33737"/>
        <dbReference type="ChEBI" id="CHEBI:33738"/>
        <dbReference type="ChEBI" id="CHEBI:57844"/>
        <dbReference type="ChEBI" id="CHEBI:57856"/>
        <dbReference type="ChEBI" id="CHEBI:59789"/>
        <dbReference type="ChEBI" id="CHEBI:74411"/>
        <dbReference type="ChEBI" id="CHEBI:74497"/>
        <dbReference type="EC" id="2.1.1.192"/>
    </reaction>
</comment>
<comment type="cofactor">
    <cofactor evidence="1">
        <name>[4Fe-4S] cluster</name>
        <dbReference type="ChEBI" id="CHEBI:49883"/>
    </cofactor>
    <text evidence="1">Binds 1 [4Fe-4S] cluster. The cluster is coordinated with 3 cysteines and an exchangeable S-adenosyl-L-methionine.</text>
</comment>
<comment type="subcellular location">
    <subcellularLocation>
        <location evidence="1">Cytoplasm</location>
    </subcellularLocation>
</comment>
<comment type="miscellaneous">
    <text evidence="1">Reaction proceeds by a ping-pong mechanism involving intermediate methylation of a conserved cysteine residue.</text>
</comment>
<comment type="similarity">
    <text evidence="1">Belongs to the radical SAM superfamily. RlmN family.</text>
</comment>
<proteinExistence type="inferred from homology"/>
<keyword id="KW-0004">4Fe-4S</keyword>
<keyword id="KW-0963">Cytoplasm</keyword>
<keyword id="KW-1015">Disulfide bond</keyword>
<keyword id="KW-0408">Iron</keyword>
<keyword id="KW-0411">Iron-sulfur</keyword>
<keyword id="KW-0479">Metal-binding</keyword>
<keyword id="KW-0489">Methyltransferase</keyword>
<keyword id="KW-0698">rRNA processing</keyword>
<keyword id="KW-0949">S-adenosyl-L-methionine</keyword>
<keyword id="KW-0808">Transferase</keyword>
<keyword id="KW-0819">tRNA processing</keyword>
<accession>A8L6D8</accession>
<name>RLMN_PARS2</name>
<feature type="chain" id="PRO_0000350190" description="Probable dual-specificity RNA methyltransferase RlmN">
    <location>
        <begin position="1"/>
        <end position="385"/>
    </location>
</feature>
<feature type="domain" description="Radical SAM core" evidence="2">
    <location>
        <begin position="120"/>
        <end position="364"/>
    </location>
</feature>
<feature type="region of interest" description="Disordered" evidence="3">
    <location>
        <begin position="1"/>
        <end position="24"/>
    </location>
</feature>
<feature type="active site" description="Proton acceptor" evidence="1">
    <location>
        <position position="114"/>
    </location>
</feature>
<feature type="active site" description="S-methylcysteine intermediate" evidence="1">
    <location>
        <position position="370"/>
    </location>
</feature>
<feature type="binding site" evidence="1">
    <location>
        <position position="134"/>
    </location>
    <ligand>
        <name>[4Fe-4S] cluster</name>
        <dbReference type="ChEBI" id="CHEBI:49883"/>
        <note>4Fe-4S-S-AdoMet</note>
    </ligand>
</feature>
<feature type="binding site" evidence="1">
    <location>
        <position position="138"/>
    </location>
    <ligand>
        <name>[4Fe-4S] cluster</name>
        <dbReference type="ChEBI" id="CHEBI:49883"/>
        <note>4Fe-4S-S-AdoMet</note>
    </ligand>
</feature>
<feature type="binding site" evidence="1">
    <location>
        <position position="141"/>
    </location>
    <ligand>
        <name>[4Fe-4S] cluster</name>
        <dbReference type="ChEBI" id="CHEBI:49883"/>
        <note>4Fe-4S-S-AdoMet</note>
    </ligand>
</feature>
<feature type="binding site" evidence="1">
    <location>
        <begin position="194"/>
        <end position="195"/>
    </location>
    <ligand>
        <name>S-adenosyl-L-methionine</name>
        <dbReference type="ChEBI" id="CHEBI:59789"/>
    </ligand>
</feature>
<feature type="binding site" evidence="1">
    <location>
        <position position="228"/>
    </location>
    <ligand>
        <name>S-adenosyl-L-methionine</name>
        <dbReference type="ChEBI" id="CHEBI:59789"/>
    </ligand>
</feature>
<feature type="binding site" evidence="1">
    <location>
        <begin position="251"/>
        <end position="253"/>
    </location>
    <ligand>
        <name>S-adenosyl-L-methionine</name>
        <dbReference type="ChEBI" id="CHEBI:59789"/>
    </ligand>
</feature>
<feature type="binding site" evidence="1">
    <location>
        <position position="327"/>
    </location>
    <ligand>
        <name>S-adenosyl-L-methionine</name>
        <dbReference type="ChEBI" id="CHEBI:59789"/>
    </ligand>
</feature>
<feature type="disulfide bond" description="(transient)" evidence="1">
    <location>
        <begin position="127"/>
        <end position="370"/>
    </location>
</feature>
<dbReference type="EC" id="2.1.1.192" evidence="1"/>
<dbReference type="EMBL" id="CP000820">
    <property type="protein sequence ID" value="ABW10620.1"/>
    <property type="molecule type" value="Genomic_DNA"/>
</dbReference>
<dbReference type="RefSeq" id="WP_020458796.1">
    <property type="nucleotide sequence ID" value="NC_009921.1"/>
</dbReference>
<dbReference type="SMR" id="A8L6D8"/>
<dbReference type="STRING" id="298653.Franean1_1166"/>
<dbReference type="KEGG" id="fre:Franean1_1166"/>
<dbReference type="eggNOG" id="COG0820">
    <property type="taxonomic scope" value="Bacteria"/>
</dbReference>
<dbReference type="HOGENOM" id="CLU_029101_0_2_11"/>
<dbReference type="GO" id="GO:0005737">
    <property type="term" value="C:cytoplasm"/>
    <property type="evidence" value="ECO:0007669"/>
    <property type="project" value="UniProtKB-SubCell"/>
</dbReference>
<dbReference type="GO" id="GO:0051539">
    <property type="term" value="F:4 iron, 4 sulfur cluster binding"/>
    <property type="evidence" value="ECO:0007669"/>
    <property type="project" value="UniProtKB-UniRule"/>
</dbReference>
<dbReference type="GO" id="GO:0046872">
    <property type="term" value="F:metal ion binding"/>
    <property type="evidence" value="ECO:0007669"/>
    <property type="project" value="UniProtKB-KW"/>
</dbReference>
<dbReference type="GO" id="GO:0070040">
    <property type="term" value="F:rRNA (adenine(2503)-C2-)-methyltransferase activity"/>
    <property type="evidence" value="ECO:0007669"/>
    <property type="project" value="UniProtKB-UniRule"/>
</dbReference>
<dbReference type="GO" id="GO:0019843">
    <property type="term" value="F:rRNA binding"/>
    <property type="evidence" value="ECO:0007669"/>
    <property type="project" value="UniProtKB-UniRule"/>
</dbReference>
<dbReference type="GO" id="GO:0002935">
    <property type="term" value="F:tRNA (adenine(37)-C2)-methyltransferase activity"/>
    <property type="evidence" value="ECO:0007669"/>
    <property type="project" value="UniProtKB-UniRule"/>
</dbReference>
<dbReference type="GO" id="GO:0000049">
    <property type="term" value="F:tRNA binding"/>
    <property type="evidence" value="ECO:0007669"/>
    <property type="project" value="UniProtKB-UniRule"/>
</dbReference>
<dbReference type="GO" id="GO:0070475">
    <property type="term" value="P:rRNA base methylation"/>
    <property type="evidence" value="ECO:0007669"/>
    <property type="project" value="UniProtKB-UniRule"/>
</dbReference>
<dbReference type="GO" id="GO:0030488">
    <property type="term" value="P:tRNA methylation"/>
    <property type="evidence" value="ECO:0007669"/>
    <property type="project" value="UniProtKB-UniRule"/>
</dbReference>
<dbReference type="CDD" id="cd01335">
    <property type="entry name" value="Radical_SAM"/>
    <property type="match status" value="1"/>
</dbReference>
<dbReference type="FunFam" id="3.20.20.70:FF:000014">
    <property type="entry name" value="Probable dual-specificity RNA methyltransferase RlmN"/>
    <property type="match status" value="1"/>
</dbReference>
<dbReference type="Gene3D" id="1.10.150.530">
    <property type="match status" value="1"/>
</dbReference>
<dbReference type="Gene3D" id="3.20.20.70">
    <property type="entry name" value="Aldolase class I"/>
    <property type="match status" value="1"/>
</dbReference>
<dbReference type="HAMAP" id="MF_01849">
    <property type="entry name" value="RNA_methyltr_RlmN"/>
    <property type="match status" value="1"/>
</dbReference>
<dbReference type="InterPro" id="IPR013785">
    <property type="entry name" value="Aldolase_TIM"/>
</dbReference>
<dbReference type="InterPro" id="IPR040072">
    <property type="entry name" value="Methyltransferase_A"/>
</dbReference>
<dbReference type="InterPro" id="IPR027492">
    <property type="entry name" value="RNA_MTrfase_RlmN"/>
</dbReference>
<dbReference type="InterPro" id="IPR004383">
    <property type="entry name" value="rRNA_lsu_MTrfase_RlmN/Cfr"/>
</dbReference>
<dbReference type="InterPro" id="IPR007197">
    <property type="entry name" value="rSAM"/>
</dbReference>
<dbReference type="NCBIfam" id="TIGR00048">
    <property type="entry name" value="rRNA_mod_RlmN"/>
    <property type="match status" value="1"/>
</dbReference>
<dbReference type="PANTHER" id="PTHR30544">
    <property type="entry name" value="23S RRNA METHYLTRANSFERASE"/>
    <property type="match status" value="1"/>
</dbReference>
<dbReference type="PANTHER" id="PTHR30544:SF5">
    <property type="entry name" value="RADICAL SAM CORE DOMAIN-CONTAINING PROTEIN"/>
    <property type="match status" value="1"/>
</dbReference>
<dbReference type="Pfam" id="PF04055">
    <property type="entry name" value="Radical_SAM"/>
    <property type="match status" value="1"/>
</dbReference>
<dbReference type="PIRSF" id="PIRSF006004">
    <property type="entry name" value="CHP00048"/>
    <property type="match status" value="1"/>
</dbReference>
<dbReference type="SFLD" id="SFLDF00275">
    <property type="entry name" value="adenosine_C2_methyltransferase"/>
    <property type="match status" value="1"/>
</dbReference>
<dbReference type="SFLD" id="SFLDG01062">
    <property type="entry name" value="methyltransferase_(Class_A)"/>
    <property type="match status" value="1"/>
</dbReference>
<dbReference type="SUPFAM" id="SSF102114">
    <property type="entry name" value="Radical SAM enzymes"/>
    <property type="match status" value="1"/>
</dbReference>
<dbReference type="PROSITE" id="PS51918">
    <property type="entry name" value="RADICAL_SAM"/>
    <property type="match status" value="1"/>
</dbReference>
<reference key="1">
    <citation type="journal article" date="2007" name="Genome Res.">
        <title>Genome characteristics of facultatively symbiotic Frankia sp. strains reflect host range and host plant biogeography.</title>
        <authorList>
            <person name="Normand P."/>
            <person name="Lapierre P."/>
            <person name="Tisa L.S."/>
            <person name="Gogarten J.P."/>
            <person name="Alloisio N."/>
            <person name="Bagnarol E."/>
            <person name="Bassi C.A."/>
            <person name="Berry A.M."/>
            <person name="Bickhart D.M."/>
            <person name="Choisne N."/>
            <person name="Couloux A."/>
            <person name="Cournoyer B."/>
            <person name="Cruveiller S."/>
            <person name="Daubin V."/>
            <person name="Demange N."/>
            <person name="Francino M.P."/>
            <person name="Goltsman E."/>
            <person name="Huang Y."/>
            <person name="Kopp O.R."/>
            <person name="Labarre L."/>
            <person name="Lapidus A."/>
            <person name="Lavire C."/>
            <person name="Marechal J."/>
            <person name="Martinez M."/>
            <person name="Mastronunzio J.E."/>
            <person name="Mullin B.C."/>
            <person name="Niemann J."/>
            <person name="Pujic P."/>
            <person name="Rawnsley T."/>
            <person name="Rouy Z."/>
            <person name="Schenowitz C."/>
            <person name="Sellstedt A."/>
            <person name="Tavares F."/>
            <person name="Tomkins J.P."/>
            <person name="Vallenet D."/>
            <person name="Valverde C."/>
            <person name="Wall L.G."/>
            <person name="Wang Y."/>
            <person name="Medigue C."/>
            <person name="Benson D.R."/>
        </authorList>
    </citation>
    <scope>NUCLEOTIDE SEQUENCE [LARGE SCALE GENOMIC DNA]</scope>
    <source>
        <strain>EAN1pec</strain>
    </source>
</reference>